<keyword id="KW-0217">Developmental protein</keyword>
<keyword id="KW-1015">Disulfide bond</keyword>
<keyword id="KW-0272">Extracellular matrix</keyword>
<keyword id="KW-0325">Glycoprotein</keyword>
<keyword id="KW-0449">Lipoprotein</keyword>
<keyword id="KW-0964">Secreted</keyword>
<keyword id="KW-0879">Wnt signaling pathway</keyword>
<feature type="chain" id="PRO_0000200623" description="Protein Wnt-4">
    <location>
        <begin position="1" status="less than"/>
        <end position="119" status="greater than"/>
    </location>
</feature>
<feature type="lipid moiety-binding region" description="O-palmitoleoyl serine; by PORCN" evidence="4">
    <location>
        <position position="1"/>
    </location>
</feature>
<feature type="glycosylation site" description="N-linked (GlcNAc...) asparagine" evidence="5">
    <location>
        <position position="86"/>
    </location>
</feature>
<feature type="disulfide bond" evidence="3">
    <location>
        <begin position="69"/>
        <end position="100"/>
    </location>
</feature>
<feature type="disulfide bond" evidence="3">
    <location>
        <begin position="85"/>
        <end position="95"/>
    </location>
</feature>
<feature type="non-terminal residue">
    <location>
        <position position="1"/>
    </location>
</feature>
<feature type="non-terminal residue">
    <location>
        <position position="119"/>
    </location>
</feature>
<dbReference type="EMBL" id="M91265">
    <property type="protein sequence ID" value="AAA76839.1"/>
    <property type="molecule type" value="Genomic_DNA"/>
</dbReference>
<dbReference type="SMR" id="P28115"/>
<dbReference type="GlyCosmos" id="P28115">
    <property type="glycosylation" value="1 site, No reported glycans"/>
</dbReference>
<dbReference type="GO" id="GO:0005615">
    <property type="term" value="C:extracellular space"/>
    <property type="evidence" value="ECO:0007669"/>
    <property type="project" value="TreeGrafter"/>
</dbReference>
<dbReference type="GO" id="GO:0005125">
    <property type="term" value="F:cytokine activity"/>
    <property type="evidence" value="ECO:0007669"/>
    <property type="project" value="TreeGrafter"/>
</dbReference>
<dbReference type="GO" id="GO:0005109">
    <property type="term" value="F:frizzled binding"/>
    <property type="evidence" value="ECO:0007669"/>
    <property type="project" value="TreeGrafter"/>
</dbReference>
<dbReference type="GO" id="GO:0060070">
    <property type="term" value="P:canonical Wnt signaling pathway"/>
    <property type="evidence" value="ECO:0007669"/>
    <property type="project" value="TreeGrafter"/>
</dbReference>
<dbReference type="GO" id="GO:0045165">
    <property type="term" value="P:cell fate commitment"/>
    <property type="evidence" value="ECO:0007669"/>
    <property type="project" value="TreeGrafter"/>
</dbReference>
<dbReference type="GO" id="GO:0030182">
    <property type="term" value="P:neuron differentiation"/>
    <property type="evidence" value="ECO:0007669"/>
    <property type="project" value="TreeGrafter"/>
</dbReference>
<dbReference type="Gene3D" id="3.30.2460.20">
    <property type="match status" value="1"/>
</dbReference>
<dbReference type="InterPro" id="IPR005817">
    <property type="entry name" value="Wnt"/>
</dbReference>
<dbReference type="InterPro" id="IPR043158">
    <property type="entry name" value="Wnt_C"/>
</dbReference>
<dbReference type="PANTHER" id="PTHR12027:SF101">
    <property type="entry name" value="PROTEIN WNT-4"/>
    <property type="match status" value="1"/>
</dbReference>
<dbReference type="PANTHER" id="PTHR12027">
    <property type="entry name" value="WNT RELATED"/>
    <property type="match status" value="1"/>
</dbReference>
<dbReference type="Pfam" id="PF00110">
    <property type="entry name" value="wnt"/>
    <property type="match status" value="1"/>
</dbReference>
<dbReference type="SMART" id="SM00097">
    <property type="entry name" value="WNT1"/>
    <property type="match status" value="1"/>
</dbReference>
<evidence type="ECO:0000250" key="1">
    <source>
        <dbReference type="UniProtKB" id="P22724"/>
    </source>
</evidence>
<evidence type="ECO:0000250" key="2">
    <source>
        <dbReference type="UniProtKB" id="P27467"/>
    </source>
</evidence>
<evidence type="ECO:0000250" key="3">
    <source>
        <dbReference type="UniProtKB" id="P28026"/>
    </source>
</evidence>
<evidence type="ECO:0000250" key="4">
    <source>
        <dbReference type="UniProtKB" id="P56704"/>
    </source>
</evidence>
<evidence type="ECO:0000255" key="5"/>
<evidence type="ECO:0000305" key="6"/>
<reference key="1">
    <citation type="journal article" date="1992" name="Proc. Natl. Acad. Sci. U.S.A.">
        <title>Diversification of the Wnt gene family on the ancestral lineage of vertebrates.</title>
        <authorList>
            <person name="Sidow A."/>
        </authorList>
    </citation>
    <scope>NUCLEOTIDE SEQUENCE [GENOMIC DNA]</scope>
</reference>
<accession>P28115</accession>
<protein>
    <recommendedName>
        <fullName>Protein Wnt-4</fullName>
    </recommendedName>
</protein>
<proteinExistence type="inferred from homology"/>
<name>WNT4_EPTST</name>
<sequence>SGSCEVKTCWRAMPPFRKVGNVIKEKFDGATEVEMQRIGTRKQLVPKNPQFKPHTDEDLVYISPSPDFCIRDMKAGVPGTAGRHCNRTSKALGGCELLCCGRGFHTAEAELVERCSCKF</sequence>
<gene>
    <name type="primary">WNT-4</name>
</gene>
<organism>
    <name type="scientific">Eptatretus stoutii</name>
    <name type="common">Pacific hagfish</name>
    <dbReference type="NCBI Taxonomy" id="7765"/>
    <lineage>
        <taxon>Eukaryota</taxon>
        <taxon>Metazoa</taxon>
        <taxon>Chordata</taxon>
        <taxon>Craniata</taxon>
        <taxon>Vertebrata</taxon>
        <taxon>Cyclostomata</taxon>
        <taxon>Myxini</taxon>
        <taxon>Myxiniformes</taxon>
        <taxon>Myxinidae</taxon>
        <taxon>Eptatretinae</taxon>
        <taxon>Eptatretus</taxon>
    </lineage>
</organism>
<comment type="function">
    <text evidence="1 6">Ligand for members of the frizzled family of seven transmembrane receptors (Probable). Plays an important role in embryonic development (By similarity).</text>
</comment>
<comment type="subcellular location">
    <subcellularLocation>
        <location>Secreted</location>
        <location>Extracellular space</location>
        <location>Extracellular matrix</location>
    </subcellularLocation>
</comment>
<comment type="PTM">
    <text evidence="2 4">Palmitoleoylation is required for efficient binding to frizzled receptors. Depalmitoleoylation leads to Wnt signaling pathway inhibition.</text>
</comment>
<comment type="similarity">
    <text evidence="6">Belongs to the Wnt family.</text>
</comment>